<accession>Q02XA6</accession>
<sequence length="141" mass="15624">MSENVMTLQVITPAGVVYDHHANYITARTTNGEIGILPNMISTIAGLEIDELKVRRPDDETHVDYIAVNGGIIEIKDSLVTIVADSAERNRDIDVSRAERAKIRAEKALEVAKAEKKSDEIKRVEVALHRALNRLNVSSHN</sequence>
<protein>
    <recommendedName>
        <fullName evidence="1">ATP synthase epsilon chain</fullName>
    </recommendedName>
    <alternativeName>
        <fullName evidence="1">ATP synthase F1 sector epsilon subunit</fullName>
    </alternativeName>
    <alternativeName>
        <fullName evidence="1">F-ATPase epsilon subunit</fullName>
    </alternativeName>
</protein>
<comment type="function">
    <text evidence="1">Produces ATP from ADP in the presence of a proton gradient across the membrane.</text>
</comment>
<comment type="subunit">
    <text evidence="1">F-type ATPases have 2 components, CF(1) - the catalytic core - and CF(0) - the membrane proton channel. CF(1) has five subunits: alpha(3), beta(3), gamma(1), delta(1), epsilon(1). CF(0) has three main subunits: a, b and c.</text>
</comment>
<comment type="subcellular location">
    <subcellularLocation>
        <location evidence="1">Cell membrane</location>
        <topology evidence="1">Peripheral membrane protein</topology>
    </subcellularLocation>
</comment>
<comment type="similarity">
    <text evidence="1">Belongs to the ATPase epsilon chain family.</text>
</comment>
<keyword id="KW-0066">ATP synthesis</keyword>
<keyword id="KW-1003">Cell membrane</keyword>
<keyword id="KW-0139">CF(1)</keyword>
<keyword id="KW-0375">Hydrogen ion transport</keyword>
<keyword id="KW-0406">Ion transport</keyword>
<keyword id="KW-0472">Membrane</keyword>
<keyword id="KW-0813">Transport</keyword>
<feature type="chain" id="PRO_1000056497" description="ATP synthase epsilon chain">
    <location>
        <begin position="1"/>
        <end position="141"/>
    </location>
</feature>
<proteinExistence type="inferred from homology"/>
<evidence type="ECO:0000255" key="1">
    <source>
        <dbReference type="HAMAP-Rule" id="MF_00530"/>
    </source>
</evidence>
<gene>
    <name evidence="1" type="primary">atpC</name>
    <name type="ordered locus">LACR_1932</name>
</gene>
<reference key="1">
    <citation type="journal article" date="2006" name="Proc. Natl. Acad. Sci. U.S.A.">
        <title>Comparative genomics of the lactic acid bacteria.</title>
        <authorList>
            <person name="Makarova K.S."/>
            <person name="Slesarev A."/>
            <person name="Wolf Y.I."/>
            <person name="Sorokin A."/>
            <person name="Mirkin B."/>
            <person name="Koonin E.V."/>
            <person name="Pavlov A."/>
            <person name="Pavlova N."/>
            <person name="Karamychev V."/>
            <person name="Polouchine N."/>
            <person name="Shakhova V."/>
            <person name="Grigoriev I."/>
            <person name="Lou Y."/>
            <person name="Rohksar D."/>
            <person name="Lucas S."/>
            <person name="Huang K."/>
            <person name="Goodstein D.M."/>
            <person name="Hawkins T."/>
            <person name="Plengvidhya V."/>
            <person name="Welker D."/>
            <person name="Hughes J."/>
            <person name="Goh Y."/>
            <person name="Benson A."/>
            <person name="Baldwin K."/>
            <person name="Lee J.-H."/>
            <person name="Diaz-Muniz I."/>
            <person name="Dosti B."/>
            <person name="Smeianov V."/>
            <person name="Wechter W."/>
            <person name="Barabote R."/>
            <person name="Lorca G."/>
            <person name="Altermann E."/>
            <person name="Barrangou R."/>
            <person name="Ganesan B."/>
            <person name="Xie Y."/>
            <person name="Rawsthorne H."/>
            <person name="Tamir D."/>
            <person name="Parker C."/>
            <person name="Breidt F."/>
            <person name="Broadbent J.R."/>
            <person name="Hutkins R."/>
            <person name="O'Sullivan D."/>
            <person name="Steele J."/>
            <person name="Unlu G."/>
            <person name="Saier M.H. Jr."/>
            <person name="Klaenhammer T."/>
            <person name="Richardson P."/>
            <person name="Kozyavkin S."/>
            <person name="Weimer B.C."/>
            <person name="Mills D.A."/>
        </authorList>
    </citation>
    <scope>NUCLEOTIDE SEQUENCE [LARGE SCALE GENOMIC DNA]</scope>
    <source>
        <strain>SK11</strain>
    </source>
</reference>
<organism>
    <name type="scientific">Lactococcus lactis subsp. cremoris (strain SK11)</name>
    <dbReference type="NCBI Taxonomy" id="272622"/>
    <lineage>
        <taxon>Bacteria</taxon>
        <taxon>Bacillati</taxon>
        <taxon>Bacillota</taxon>
        <taxon>Bacilli</taxon>
        <taxon>Lactobacillales</taxon>
        <taxon>Streptococcaceae</taxon>
        <taxon>Lactococcus</taxon>
        <taxon>Lactococcus cremoris subsp. cremoris</taxon>
    </lineage>
</organism>
<dbReference type="EMBL" id="CP000425">
    <property type="protein sequence ID" value="ABJ73416.1"/>
    <property type="molecule type" value="Genomic_DNA"/>
</dbReference>
<dbReference type="RefSeq" id="WP_011676764.1">
    <property type="nucleotide sequence ID" value="NC_008527.1"/>
</dbReference>
<dbReference type="SMR" id="Q02XA6"/>
<dbReference type="KEGG" id="llc:LACR_1932"/>
<dbReference type="HOGENOM" id="CLU_084338_1_0_9"/>
<dbReference type="Proteomes" id="UP000000240">
    <property type="component" value="Chromosome"/>
</dbReference>
<dbReference type="GO" id="GO:0005886">
    <property type="term" value="C:plasma membrane"/>
    <property type="evidence" value="ECO:0007669"/>
    <property type="project" value="UniProtKB-SubCell"/>
</dbReference>
<dbReference type="GO" id="GO:0045259">
    <property type="term" value="C:proton-transporting ATP synthase complex"/>
    <property type="evidence" value="ECO:0007669"/>
    <property type="project" value="UniProtKB-KW"/>
</dbReference>
<dbReference type="GO" id="GO:0005524">
    <property type="term" value="F:ATP binding"/>
    <property type="evidence" value="ECO:0007669"/>
    <property type="project" value="UniProtKB-UniRule"/>
</dbReference>
<dbReference type="GO" id="GO:0046933">
    <property type="term" value="F:proton-transporting ATP synthase activity, rotational mechanism"/>
    <property type="evidence" value="ECO:0007669"/>
    <property type="project" value="UniProtKB-UniRule"/>
</dbReference>
<dbReference type="CDD" id="cd12152">
    <property type="entry name" value="F1-ATPase_delta"/>
    <property type="match status" value="1"/>
</dbReference>
<dbReference type="Gene3D" id="1.20.5.440">
    <property type="entry name" value="ATP synthase delta/epsilon subunit, C-terminal domain"/>
    <property type="match status" value="1"/>
</dbReference>
<dbReference type="Gene3D" id="2.60.15.10">
    <property type="entry name" value="F0F1 ATP synthase delta/epsilon subunit, N-terminal"/>
    <property type="match status" value="1"/>
</dbReference>
<dbReference type="HAMAP" id="MF_00530">
    <property type="entry name" value="ATP_synth_epsil_bac"/>
    <property type="match status" value="1"/>
</dbReference>
<dbReference type="InterPro" id="IPR001469">
    <property type="entry name" value="ATP_synth_F1_dsu/esu"/>
</dbReference>
<dbReference type="InterPro" id="IPR020546">
    <property type="entry name" value="ATP_synth_F1_dsu/esu_N"/>
</dbReference>
<dbReference type="InterPro" id="IPR020547">
    <property type="entry name" value="ATP_synth_F1_esu_C"/>
</dbReference>
<dbReference type="InterPro" id="IPR036771">
    <property type="entry name" value="ATPsynth_dsu/esu_N"/>
</dbReference>
<dbReference type="NCBIfam" id="TIGR01216">
    <property type="entry name" value="ATP_synt_epsi"/>
    <property type="match status" value="1"/>
</dbReference>
<dbReference type="NCBIfam" id="NF001846">
    <property type="entry name" value="PRK00571.1-3"/>
    <property type="match status" value="1"/>
</dbReference>
<dbReference type="PANTHER" id="PTHR13822">
    <property type="entry name" value="ATP SYNTHASE DELTA/EPSILON CHAIN"/>
    <property type="match status" value="1"/>
</dbReference>
<dbReference type="PANTHER" id="PTHR13822:SF10">
    <property type="entry name" value="ATP SYNTHASE EPSILON CHAIN, CHLOROPLASTIC"/>
    <property type="match status" value="1"/>
</dbReference>
<dbReference type="Pfam" id="PF00401">
    <property type="entry name" value="ATP-synt_DE"/>
    <property type="match status" value="1"/>
</dbReference>
<dbReference type="Pfam" id="PF02823">
    <property type="entry name" value="ATP-synt_DE_N"/>
    <property type="match status" value="1"/>
</dbReference>
<dbReference type="SUPFAM" id="SSF51344">
    <property type="entry name" value="Epsilon subunit of F1F0-ATP synthase N-terminal domain"/>
    <property type="match status" value="1"/>
</dbReference>
<name>ATPE_LACLS</name>